<name>RS10_BEII9</name>
<gene>
    <name evidence="1" type="primary">rpsJ</name>
    <name type="ordered locus">Bind_1353</name>
</gene>
<comment type="function">
    <text evidence="1">Involved in the binding of tRNA to the ribosomes.</text>
</comment>
<comment type="subunit">
    <text evidence="1">Part of the 30S ribosomal subunit.</text>
</comment>
<comment type="similarity">
    <text evidence="1">Belongs to the universal ribosomal protein uS10 family.</text>
</comment>
<organism>
    <name type="scientific">Beijerinckia indica subsp. indica (strain ATCC 9039 / DSM 1715 / NCIMB 8712)</name>
    <dbReference type="NCBI Taxonomy" id="395963"/>
    <lineage>
        <taxon>Bacteria</taxon>
        <taxon>Pseudomonadati</taxon>
        <taxon>Pseudomonadota</taxon>
        <taxon>Alphaproteobacteria</taxon>
        <taxon>Hyphomicrobiales</taxon>
        <taxon>Beijerinckiaceae</taxon>
        <taxon>Beijerinckia</taxon>
    </lineage>
</organism>
<accession>B2IK61</accession>
<protein>
    <recommendedName>
        <fullName evidence="1">Small ribosomal subunit protein uS10</fullName>
    </recommendedName>
    <alternativeName>
        <fullName evidence="2">30S ribosomal protein S10</fullName>
    </alternativeName>
</protein>
<reference key="1">
    <citation type="journal article" date="2010" name="J. Bacteriol.">
        <title>Complete genome sequence of Beijerinckia indica subsp. indica.</title>
        <authorList>
            <person name="Tamas I."/>
            <person name="Dedysh S.N."/>
            <person name="Liesack W."/>
            <person name="Stott M.B."/>
            <person name="Alam M."/>
            <person name="Murrell J.C."/>
            <person name="Dunfield P.F."/>
        </authorList>
    </citation>
    <scope>NUCLEOTIDE SEQUENCE [LARGE SCALE GENOMIC DNA]</scope>
    <source>
        <strain>ATCC 9039 / DSM 1715 / NCIMB 8712</strain>
    </source>
</reference>
<dbReference type="EMBL" id="CP001016">
    <property type="protein sequence ID" value="ACB94993.1"/>
    <property type="molecule type" value="Genomic_DNA"/>
</dbReference>
<dbReference type="RefSeq" id="WP_012384350.1">
    <property type="nucleotide sequence ID" value="NC_010581.1"/>
</dbReference>
<dbReference type="SMR" id="B2IK61"/>
<dbReference type="STRING" id="395963.Bind_1353"/>
<dbReference type="KEGG" id="bid:Bind_1353"/>
<dbReference type="eggNOG" id="COG0051">
    <property type="taxonomic scope" value="Bacteria"/>
</dbReference>
<dbReference type="HOGENOM" id="CLU_122625_1_3_5"/>
<dbReference type="OrthoDB" id="9804464at2"/>
<dbReference type="Proteomes" id="UP000001695">
    <property type="component" value="Chromosome"/>
</dbReference>
<dbReference type="GO" id="GO:1990904">
    <property type="term" value="C:ribonucleoprotein complex"/>
    <property type="evidence" value="ECO:0007669"/>
    <property type="project" value="UniProtKB-KW"/>
</dbReference>
<dbReference type="GO" id="GO:0005840">
    <property type="term" value="C:ribosome"/>
    <property type="evidence" value="ECO:0007669"/>
    <property type="project" value="UniProtKB-KW"/>
</dbReference>
<dbReference type="GO" id="GO:0003735">
    <property type="term" value="F:structural constituent of ribosome"/>
    <property type="evidence" value="ECO:0007669"/>
    <property type="project" value="InterPro"/>
</dbReference>
<dbReference type="GO" id="GO:0000049">
    <property type="term" value="F:tRNA binding"/>
    <property type="evidence" value="ECO:0007669"/>
    <property type="project" value="UniProtKB-UniRule"/>
</dbReference>
<dbReference type="GO" id="GO:0006412">
    <property type="term" value="P:translation"/>
    <property type="evidence" value="ECO:0007669"/>
    <property type="project" value="UniProtKB-UniRule"/>
</dbReference>
<dbReference type="FunFam" id="3.30.70.600:FF:000001">
    <property type="entry name" value="30S ribosomal protein S10"/>
    <property type="match status" value="1"/>
</dbReference>
<dbReference type="Gene3D" id="3.30.70.600">
    <property type="entry name" value="Ribosomal protein S10 domain"/>
    <property type="match status" value="1"/>
</dbReference>
<dbReference type="HAMAP" id="MF_00508">
    <property type="entry name" value="Ribosomal_uS10"/>
    <property type="match status" value="1"/>
</dbReference>
<dbReference type="InterPro" id="IPR001848">
    <property type="entry name" value="Ribosomal_uS10"/>
</dbReference>
<dbReference type="InterPro" id="IPR018268">
    <property type="entry name" value="Ribosomal_uS10_CS"/>
</dbReference>
<dbReference type="InterPro" id="IPR027486">
    <property type="entry name" value="Ribosomal_uS10_dom"/>
</dbReference>
<dbReference type="InterPro" id="IPR036838">
    <property type="entry name" value="Ribosomal_uS10_dom_sf"/>
</dbReference>
<dbReference type="NCBIfam" id="NF001861">
    <property type="entry name" value="PRK00596.1"/>
    <property type="match status" value="1"/>
</dbReference>
<dbReference type="NCBIfam" id="TIGR01049">
    <property type="entry name" value="rpsJ_bact"/>
    <property type="match status" value="1"/>
</dbReference>
<dbReference type="PANTHER" id="PTHR11700">
    <property type="entry name" value="30S RIBOSOMAL PROTEIN S10 FAMILY MEMBER"/>
    <property type="match status" value="1"/>
</dbReference>
<dbReference type="Pfam" id="PF00338">
    <property type="entry name" value="Ribosomal_S10"/>
    <property type="match status" value="1"/>
</dbReference>
<dbReference type="PRINTS" id="PR00971">
    <property type="entry name" value="RIBOSOMALS10"/>
</dbReference>
<dbReference type="SMART" id="SM01403">
    <property type="entry name" value="Ribosomal_S10"/>
    <property type="match status" value="1"/>
</dbReference>
<dbReference type="SUPFAM" id="SSF54999">
    <property type="entry name" value="Ribosomal protein S10"/>
    <property type="match status" value="1"/>
</dbReference>
<dbReference type="PROSITE" id="PS00361">
    <property type="entry name" value="RIBOSOMAL_S10"/>
    <property type="match status" value="1"/>
</dbReference>
<evidence type="ECO:0000255" key="1">
    <source>
        <dbReference type="HAMAP-Rule" id="MF_00508"/>
    </source>
</evidence>
<evidence type="ECO:0000305" key="2"/>
<proteinExistence type="inferred from homology"/>
<feature type="chain" id="PRO_1000127081" description="Small ribosomal subunit protein uS10">
    <location>
        <begin position="1"/>
        <end position="102"/>
    </location>
</feature>
<sequence length="102" mass="11553">MNGQNIRIRLKAFDHRILDTSTKEIVSTAKRTGAQVRGPIPLPTKIEKFTVNRSPHVDKKSREQFEIRTHKRVLDIVDPTPQTVDALMKLDLAAGVDVEIKL</sequence>
<keyword id="KW-1185">Reference proteome</keyword>
<keyword id="KW-0687">Ribonucleoprotein</keyword>
<keyword id="KW-0689">Ribosomal protein</keyword>